<dbReference type="EMBL" id="CP000805">
    <property type="protein sequence ID" value="ACD70610.1"/>
    <property type="molecule type" value="Genomic_DNA"/>
</dbReference>
<dbReference type="RefSeq" id="WP_010881631.1">
    <property type="nucleotide sequence ID" value="NC_021508.1"/>
</dbReference>
<dbReference type="SMR" id="B2S2D1"/>
<dbReference type="GeneID" id="93875972"/>
<dbReference type="KEGG" id="tpp:TPASS_0184"/>
<dbReference type="PATRIC" id="fig|455434.6.peg.187"/>
<dbReference type="Proteomes" id="UP000001202">
    <property type="component" value="Chromosome"/>
</dbReference>
<dbReference type="GO" id="GO:0005829">
    <property type="term" value="C:cytosol"/>
    <property type="evidence" value="ECO:0007669"/>
    <property type="project" value="TreeGrafter"/>
</dbReference>
<dbReference type="GO" id="GO:0003723">
    <property type="term" value="F:RNA binding"/>
    <property type="evidence" value="ECO:0007669"/>
    <property type="project" value="UniProtKB-UniRule"/>
</dbReference>
<dbReference type="GO" id="GO:0070929">
    <property type="term" value="P:trans-translation"/>
    <property type="evidence" value="ECO:0007669"/>
    <property type="project" value="UniProtKB-UniRule"/>
</dbReference>
<dbReference type="CDD" id="cd09294">
    <property type="entry name" value="SmpB"/>
    <property type="match status" value="1"/>
</dbReference>
<dbReference type="Gene3D" id="2.40.280.10">
    <property type="match status" value="1"/>
</dbReference>
<dbReference type="HAMAP" id="MF_00023">
    <property type="entry name" value="SmpB"/>
    <property type="match status" value="1"/>
</dbReference>
<dbReference type="InterPro" id="IPR023620">
    <property type="entry name" value="SmpB"/>
</dbReference>
<dbReference type="InterPro" id="IPR000037">
    <property type="entry name" value="SsrA-bd_prot"/>
</dbReference>
<dbReference type="InterPro" id="IPR020081">
    <property type="entry name" value="SsrA-bd_prot_CS"/>
</dbReference>
<dbReference type="NCBIfam" id="NF003843">
    <property type="entry name" value="PRK05422.1"/>
    <property type="match status" value="1"/>
</dbReference>
<dbReference type="NCBIfam" id="TIGR00086">
    <property type="entry name" value="smpB"/>
    <property type="match status" value="1"/>
</dbReference>
<dbReference type="PANTHER" id="PTHR30308:SF2">
    <property type="entry name" value="SSRA-BINDING PROTEIN"/>
    <property type="match status" value="1"/>
</dbReference>
<dbReference type="PANTHER" id="PTHR30308">
    <property type="entry name" value="TMRNA-BINDING COMPONENT OF TRANS-TRANSLATION TAGGING COMPLEX"/>
    <property type="match status" value="1"/>
</dbReference>
<dbReference type="Pfam" id="PF01668">
    <property type="entry name" value="SmpB"/>
    <property type="match status" value="1"/>
</dbReference>
<dbReference type="SUPFAM" id="SSF74982">
    <property type="entry name" value="Small protein B (SmpB)"/>
    <property type="match status" value="1"/>
</dbReference>
<dbReference type="PROSITE" id="PS01317">
    <property type="entry name" value="SSRP"/>
    <property type="match status" value="1"/>
</dbReference>
<comment type="function">
    <text evidence="1">Required for rescue of stalled ribosomes mediated by trans-translation. Binds to transfer-messenger RNA (tmRNA), required for stable association of tmRNA with ribosomes. tmRNA and SmpB together mimic tRNA shape, replacing the anticodon stem-loop with SmpB. tmRNA is encoded by the ssrA gene; the 2 termini fold to resemble tRNA(Ala) and it encodes a 'tag peptide', a short internal open reading frame. During trans-translation Ala-aminoacylated tmRNA acts like a tRNA, entering the A-site of stalled ribosomes, displacing the stalled mRNA. The ribosome then switches to translate the ORF on the tmRNA; the nascent peptide is terminated with the 'tag peptide' encoded by the tmRNA and targeted for degradation. The ribosome is freed to recommence translation, which seems to be the essential function of trans-translation.</text>
</comment>
<comment type="subcellular location">
    <subcellularLocation>
        <location evidence="1">Cytoplasm</location>
    </subcellularLocation>
    <text evidence="1">The tmRNA-SmpB complex associates with stalled 70S ribosomes.</text>
</comment>
<comment type="similarity">
    <text evidence="1">Belongs to the SmpB family.</text>
</comment>
<proteinExistence type="inferred from homology"/>
<sequence>MRGTGTHLIAKNRKAFFNYHVEDRLECGIALEGTEVKSVRAGHLSFPDAFAEMRGGELWLKNVHIAEYVHACSFAPNPDRMRKLLAHRDQIARLKRKVEEKGYTLVPLEFYLKAGRVKVALGICKGKKLFDKRAQIKARDNARELSRSLCERHH</sequence>
<protein>
    <recommendedName>
        <fullName evidence="1">SsrA-binding protein</fullName>
    </recommendedName>
    <alternativeName>
        <fullName evidence="1">Small protein B</fullName>
    </alternativeName>
</protein>
<organism>
    <name type="scientific">Treponema pallidum subsp. pallidum (strain SS14)</name>
    <dbReference type="NCBI Taxonomy" id="455434"/>
    <lineage>
        <taxon>Bacteria</taxon>
        <taxon>Pseudomonadati</taxon>
        <taxon>Spirochaetota</taxon>
        <taxon>Spirochaetia</taxon>
        <taxon>Spirochaetales</taxon>
        <taxon>Treponemataceae</taxon>
        <taxon>Treponema</taxon>
    </lineage>
</organism>
<accession>B2S2D1</accession>
<name>SSRP_TREPS</name>
<gene>
    <name evidence="1" type="primary">smpB</name>
    <name type="ordered locus">TPASS_0184</name>
</gene>
<reference key="1">
    <citation type="journal article" date="2008" name="BMC Microbiol.">
        <title>Complete genome sequence of Treponema pallidum ssp. pallidum strain SS14 determined with oligonucleotide arrays.</title>
        <authorList>
            <person name="Matejkova P."/>
            <person name="Strouhal M."/>
            <person name="Smajs D."/>
            <person name="Norris S.J."/>
            <person name="Palzkill T."/>
            <person name="Petrosino J.F."/>
            <person name="Sodergren E."/>
            <person name="Norton J.E."/>
            <person name="Singh J."/>
            <person name="Richmond T.A."/>
            <person name="Molla M.N."/>
            <person name="Albert T.J."/>
            <person name="Weinstock G.M."/>
        </authorList>
    </citation>
    <scope>NUCLEOTIDE SEQUENCE [LARGE SCALE GENOMIC DNA]</scope>
    <source>
        <strain>SS14</strain>
    </source>
</reference>
<feature type="chain" id="PRO_1000090197" description="SsrA-binding protein">
    <location>
        <begin position="1"/>
        <end position="154"/>
    </location>
</feature>
<keyword id="KW-0963">Cytoplasm</keyword>
<keyword id="KW-0694">RNA-binding</keyword>
<evidence type="ECO:0000255" key="1">
    <source>
        <dbReference type="HAMAP-Rule" id="MF_00023"/>
    </source>
</evidence>